<name>GCSP_YERPN</name>
<comment type="function">
    <text evidence="1">The glycine cleavage system catalyzes the degradation of glycine. The P protein binds the alpha-amino group of glycine through its pyridoxal phosphate cofactor; CO(2) is released and the remaining methylamine moiety is then transferred to the lipoamide cofactor of the H protein.</text>
</comment>
<comment type="catalytic activity">
    <reaction evidence="1">
        <text>N(6)-[(R)-lipoyl]-L-lysyl-[glycine-cleavage complex H protein] + glycine + H(+) = N(6)-[(R)-S(8)-aminomethyldihydrolipoyl]-L-lysyl-[glycine-cleavage complex H protein] + CO2</text>
        <dbReference type="Rhea" id="RHEA:24304"/>
        <dbReference type="Rhea" id="RHEA-COMP:10494"/>
        <dbReference type="Rhea" id="RHEA-COMP:10495"/>
        <dbReference type="ChEBI" id="CHEBI:15378"/>
        <dbReference type="ChEBI" id="CHEBI:16526"/>
        <dbReference type="ChEBI" id="CHEBI:57305"/>
        <dbReference type="ChEBI" id="CHEBI:83099"/>
        <dbReference type="ChEBI" id="CHEBI:83143"/>
        <dbReference type="EC" id="1.4.4.2"/>
    </reaction>
</comment>
<comment type="cofactor">
    <cofactor evidence="1">
        <name>pyridoxal 5'-phosphate</name>
        <dbReference type="ChEBI" id="CHEBI:597326"/>
    </cofactor>
</comment>
<comment type="subunit">
    <text evidence="1">The glycine cleavage system is composed of four proteins: P, T, L and H.</text>
</comment>
<comment type="similarity">
    <text evidence="1">Belongs to the GcvP family.</text>
</comment>
<reference key="1">
    <citation type="journal article" date="2006" name="J. Bacteriol.">
        <title>Complete genome sequence of Yersinia pestis strains Antiqua and Nepal516: evidence of gene reduction in an emerging pathogen.</title>
        <authorList>
            <person name="Chain P.S.G."/>
            <person name="Hu P."/>
            <person name="Malfatti S.A."/>
            <person name="Radnedge L."/>
            <person name="Larimer F."/>
            <person name="Vergez L.M."/>
            <person name="Worsham P."/>
            <person name="Chu M.C."/>
            <person name="Andersen G.L."/>
        </authorList>
    </citation>
    <scope>NUCLEOTIDE SEQUENCE [LARGE SCALE GENOMIC DNA]</scope>
    <source>
        <strain>Nepal516</strain>
    </source>
</reference>
<reference key="2">
    <citation type="submission" date="2009-04" db="EMBL/GenBank/DDBJ databases">
        <title>Yersinia pestis Nepal516A whole genome shotgun sequencing project.</title>
        <authorList>
            <person name="Plunkett G. III"/>
            <person name="Anderson B.D."/>
            <person name="Baumler D.J."/>
            <person name="Burland V."/>
            <person name="Cabot E.L."/>
            <person name="Glasner J.D."/>
            <person name="Mau B."/>
            <person name="Neeno-Eckwall E."/>
            <person name="Perna N.T."/>
            <person name="Munk A.C."/>
            <person name="Tapia R."/>
            <person name="Green L.D."/>
            <person name="Rogers Y.C."/>
            <person name="Detter J.C."/>
            <person name="Bruce D.C."/>
            <person name="Brettin T.S."/>
        </authorList>
    </citation>
    <scope>NUCLEOTIDE SEQUENCE [LARGE SCALE GENOMIC DNA]</scope>
    <source>
        <strain>Nepal516</strain>
    </source>
</reference>
<keyword id="KW-0560">Oxidoreductase</keyword>
<keyword id="KW-0663">Pyridoxal phosphate</keyword>
<proteinExistence type="inferred from homology"/>
<feature type="chain" id="PRO_1000045631" description="Glycine dehydrogenase (decarboxylating)">
    <location>
        <begin position="1"/>
        <end position="959"/>
    </location>
</feature>
<feature type="modified residue" description="N6-(pyridoxal phosphate)lysine" evidence="1">
    <location>
        <position position="708"/>
    </location>
</feature>
<evidence type="ECO:0000255" key="1">
    <source>
        <dbReference type="HAMAP-Rule" id="MF_00711"/>
    </source>
</evidence>
<accession>Q1CEZ9</accession>
<accession>C4GXE4</accession>
<gene>
    <name evidence="1" type="primary">gcvP</name>
    <name type="ordered locus">YPN_3104</name>
    <name type="ORF">YP516_3523</name>
</gene>
<dbReference type="EC" id="1.4.4.2" evidence="1"/>
<dbReference type="EMBL" id="CP000305">
    <property type="protein sequence ID" value="ABG19431.1"/>
    <property type="molecule type" value="Genomic_DNA"/>
</dbReference>
<dbReference type="EMBL" id="ACNQ01000017">
    <property type="protein sequence ID" value="EEO75594.1"/>
    <property type="molecule type" value="Genomic_DNA"/>
</dbReference>
<dbReference type="RefSeq" id="WP_002209947.1">
    <property type="nucleotide sequence ID" value="NZ_ACNQ01000017.1"/>
</dbReference>
<dbReference type="SMR" id="Q1CEZ9"/>
<dbReference type="GeneID" id="57973735"/>
<dbReference type="KEGG" id="ypn:YPN_3104"/>
<dbReference type="HOGENOM" id="CLU_004620_3_2_6"/>
<dbReference type="Proteomes" id="UP000008936">
    <property type="component" value="Chromosome"/>
</dbReference>
<dbReference type="GO" id="GO:0005829">
    <property type="term" value="C:cytosol"/>
    <property type="evidence" value="ECO:0007669"/>
    <property type="project" value="TreeGrafter"/>
</dbReference>
<dbReference type="GO" id="GO:0005960">
    <property type="term" value="C:glycine cleavage complex"/>
    <property type="evidence" value="ECO:0007669"/>
    <property type="project" value="TreeGrafter"/>
</dbReference>
<dbReference type="GO" id="GO:0016594">
    <property type="term" value="F:glycine binding"/>
    <property type="evidence" value="ECO:0007669"/>
    <property type="project" value="TreeGrafter"/>
</dbReference>
<dbReference type="GO" id="GO:0004375">
    <property type="term" value="F:glycine dehydrogenase (decarboxylating) activity"/>
    <property type="evidence" value="ECO:0007669"/>
    <property type="project" value="UniProtKB-EC"/>
</dbReference>
<dbReference type="GO" id="GO:0030170">
    <property type="term" value="F:pyridoxal phosphate binding"/>
    <property type="evidence" value="ECO:0007669"/>
    <property type="project" value="TreeGrafter"/>
</dbReference>
<dbReference type="GO" id="GO:0019464">
    <property type="term" value="P:glycine decarboxylation via glycine cleavage system"/>
    <property type="evidence" value="ECO:0007669"/>
    <property type="project" value="UniProtKB-UniRule"/>
</dbReference>
<dbReference type="CDD" id="cd00613">
    <property type="entry name" value="GDC-P"/>
    <property type="match status" value="2"/>
</dbReference>
<dbReference type="FunFam" id="3.40.640.10:FF:000005">
    <property type="entry name" value="Glycine dehydrogenase (decarboxylating), mitochondrial"/>
    <property type="match status" value="1"/>
</dbReference>
<dbReference type="FunFam" id="3.90.1150.10:FF:000007">
    <property type="entry name" value="Glycine dehydrogenase (decarboxylating), mitochondrial"/>
    <property type="match status" value="1"/>
</dbReference>
<dbReference type="FunFam" id="3.40.640.10:FF:000007">
    <property type="entry name" value="glycine dehydrogenase (Decarboxylating), mitochondrial"/>
    <property type="match status" value="1"/>
</dbReference>
<dbReference type="Gene3D" id="3.90.1150.10">
    <property type="entry name" value="Aspartate Aminotransferase, domain 1"/>
    <property type="match status" value="2"/>
</dbReference>
<dbReference type="Gene3D" id="3.40.640.10">
    <property type="entry name" value="Type I PLP-dependent aspartate aminotransferase-like (Major domain)"/>
    <property type="match status" value="2"/>
</dbReference>
<dbReference type="HAMAP" id="MF_00711">
    <property type="entry name" value="GcvP"/>
    <property type="match status" value="1"/>
</dbReference>
<dbReference type="InterPro" id="IPR003437">
    <property type="entry name" value="GcvP"/>
</dbReference>
<dbReference type="InterPro" id="IPR049316">
    <property type="entry name" value="GDC-P_C"/>
</dbReference>
<dbReference type="InterPro" id="IPR049315">
    <property type="entry name" value="GDC-P_N"/>
</dbReference>
<dbReference type="InterPro" id="IPR020581">
    <property type="entry name" value="GDC_P"/>
</dbReference>
<dbReference type="InterPro" id="IPR015424">
    <property type="entry name" value="PyrdxlP-dep_Trfase"/>
</dbReference>
<dbReference type="InterPro" id="IPR015421">
    <property type="entry name" value="PyrdxlP-dep_Trfase_major"/>
</dbReference>
<dbReference type="InterPro" id="IPR015422">
    <property type="entry name" value="PyrdxlP-dep_Trfase_small"/>
</dbReference>
<dbReference type="NCBIfam" id="TIGR00461">
    <property type="entry name" value="gcvP"/>
    <property type="match status" value="1"/>
</dbReference>
<dbReference type="NCBIfam" id="NF003346">
    <property type="entry name" value="PRK04366.1"/>
    <property type="match status" value="1"/>
</dbReference>
<dbReference type="PANTHER" id="PTHR11773:SF13">
    <property type="entry name" value="GLYCINE DEHYDROGENASE (DECARBOXYLATING)"/>
    <property type="match status" value="1"/>
</dbReference>
<dbReference type="PANTHER" id="PTHR11773">
    <property type="entry name" value="GLYCINE DEHYDROGENASE, DECARBOXYLATING"/>
    <property type="match status" value="1"/>
</dbReference>
<dbReference type="Pfam" id="PF21478">
    <property type="entry name" value="GcvP2_C"/>
    <property type="match status" value="1"/>
</dbReference>
<dbReference type="Pfam" id="PF02347">
    <property type="entry name" value="GDC-P"/>
    <property type="match status" value="2"/>
</dbReference>
<dbReference type="SUPFAM" id="SSF53383">
    <property type="entry name" value="PLP-dependent transferases"/>
    <property type="match status" value="2"/>
</dbReference>
<protein>
    <recommendedName>
        <fullName evidence="1">Glycine dehydrogenase (decarboxylating)</fullName>
        <ecNumber evidence="1">1.4.4.2</ecNumber>
    </recommendedName>
    <alternativeName>
        <fullName evidence="1">Glycine cleavage system P-protein</fullName>
    </alternativeName>
    <alternativeName>
        <fullName evidence="1">Glycine decarboxylase</fullName>
    </alternativeName>
    <alternativeName>
        <fullName evidence="1">Glycine dehydrogenase (aminomethyl-transferring)</fullName>
    </alternativeName>
</protein>
<sequence>MTQNLSQLEHNDAFIQRHIGSSVEQQQQMLAAVGASSLSTLIQQIVPADIQLPGPPPVGEAATEHQALAELKGIASQNQCYKSYIGMGYSPVLTPPVILRNMLENPGWYTAYTPYQPEVSQGRLEALLNFQQLTQDLTGLDLASASLLDEATAAAESMALAKRASKLKDANRFFVADDVHPQTLDVVLTRAETFGFDVIVDRAEKVLELDGIFGVLLQQVGTTGELHDYSALLAELKKRKIITSVAADIMALVLLTAPGAQGADVVFGSAQRFGVPMGYGGPHAAFFACRDEFKRSMPGRIIGVSRDAAGNTALRMAMQTREQHIRREKANSNICTSQVLLANIASLYAVYHGPQGLQRIAGRIHRMTDILAAGLQHAGLTLRFKHWFDTLTVEVKDKAAVLARALSFGINLRTDIHGAVGITLNETTSREDIQTLFALFVGDNHGLDIDQLDAAVSQHSQSIQDSMLRRDPILTHPVFNRYHSETEMMRYMHRLERKDLALNQAMIPLGSCTMKLNAAAEMIPITWPEFAELHPFCPPEQAAGYQQMIGQLSQWLVQLTGYDAVCMQPNSGAQGEYAGLLAIRRYHESRNQANRHICLIPSSAHGTNPASAQMAGMSVVVVACDKQGNIDLHDLRQKAEHAGDELSCIMVTYPSTHGVYEETIREVCQIVHQFGGQVYLDGANMNAQVGITTPGYIGADVSHLNLHKTFCIPHGGGGPGMGPIGVKAHLAPFVPGHSVVQIDGMTTQQGAVSAAPFGSASILPISWMYIRMMGADGLKQASQVAILNANYIATRLKNAYPVLYTGHDGRVAHECILDIRPLKEATGISEMDIAKRLIDFGFHAPTMSFPVAGTLMVEPTESESKVELDRFIDAMLAIRAEIEKVAQGEWPLEDNPLVNAPHTQAELVGEWTHPYSRELAVFPVAGVLENKYWPTVKRLDDVYGDRNLFCSCVPISDYE</sequence>
<organism>
    <name type="scientific">Yersinia pestis bv. Antiqua (strain Nepal516)</name>
    <dbReference type="NCBI Taxonomy" id="377628"/>
    <lineage>
        <taxon>Bacteria</taxon>
        <taxon>Pseudomonadati</taxon>
        <taxon>Pseudomonadota</taxon>
        <taxon>Gammaproteobacteria</taxon>
        <taxon>Enterobacterales</taxon>
        <taxon>Yersiniaceae</taxon>
        <taxon>Yersinia</taxon>
    </lineage>
</organism>